<dbReference type="EC" id="3.1.-.-" evidence="1"/>
<dbReference type="EMBL" id="AY464052">
    <property type="protein sequence ID" value="AAS45934.1"/>
    <property type="molecule type" value="Genomic_DNA"/>
</dbReference>
<dbReference type="SMR" id="Q6S6S2"/>
<dbReference type="Proteomes" id="UP000008296">
    <property type="component" value="Segment"/>
</dbReference>
<dbReference type="GO" id="GO:0030430">
    <property type="term" value="C:host cell cytoplasm"/>
    <property type="evidence" value="ECO:0007669"/>
    <property type="project" value="UniProtKB-SubCell"/>
</dbReference>
<dbReference type="GO" id="GO:0042025">
    <property type="term" value="C:host cell nucleus"/>
    <property type="evidence" value="ECO:0007669"/>
    <property type="project" value="UniProtKB-SubCell"/>
</dbReference>
<dbReference type="GO" id="GO:0003677">
    <property type="term" value="F:DNA binding"/>
    <property type="evidence" value="ECO:0007669"/>
    <property type="project" value="InterPro"/>
</dbReference>
<dbReference type="GO" id="GO:0004519">
    <property type="term" value="F:endonuclease activity"/>
    <property type="evidence" value="ECO:0007669"/>
    <property type="project" value="UniProtKB-KW"/>
</dbReference>
<dbReference type="GO" id="GO:0004527">
    <property type="term" value="F:exonuclease activity"/>
    <property type="evidence" value="ECO:0007669"/>
    <property type="project" value="UniProtKB-KW"/>
</dbReference>
<dbReference type="Gene3D" id="3.90.320.10">
    <property type="match status" value="1"/>
</dbReference>
<dbReference type="HAMAP" id="MF_04009">
    <property type="entry name" value="HSV_AN"/>
    <property type="match status" value="1"/>
</dbReference>
<dbReference type="InterPro" id="IPR001616">
    <property type="entry name" value="Herpes_alk_exo"/>
</dbReference>
<dbReference type="InterPro" id="IPR011604">
    <property type="entry name" value="PDDEXK-like_dom_sf"/>
</dbReference>
<dbReference type="InterPro" id="IPR011335">
    <property type="entry name" value="Restrct_endonuc-II-like"/>
</dbReference>
<dbReference type="InterPro" id="IPR034720">
    <property type="entry name" value="Viral_alk_exo"/>
</dbReference>
<dbReference type="Pfam" id="PF01771">
    <property type="entry name" value="Viral_alk_exo"/>
    <property type="match status" value="1"/>
</dbReference>
<dbReference type="PRINTS" id="PR00924">
    <property type="entry name" value="ALKEXNUCLASE"/>
</dbReference>
<dbReference type="SUPFAM" id="SSF52980">
    <property type="entry name" value="Restriction endonuclease-like"/>
    <property type="match status" value="1"/>
</dbReference>
<reference key="1">
    <citation type="submission" date="2003-11" db="EMBL/GenBank/DDBJ databases">
        <authorList>
            <person name="Davis-Poynter N.J."/>
            <person name="Nugent J."/>
            <person name="Birch-Machin I."/>
            <person name="Allen G.P."/>
        </authorList>
    </citation>
    <scope>NUCLEOTIDE SEQUENCE [LARGE SCALE GENOMIC DNA]</scope>
</reference>
<organism>
    <name type="scientific">Equine herpesvirus 1 (strain V592)</name>
    <name type="common">EHV-1</name>
    <name type="synonym">Equine abortion virus</name>
    <dbReference type="NCBI Taxonomy" id="310273"/>
    <lineage>
        <taxon>Viruses</taxon>
        <taxon>Duplodnaviria</taxon>
        <taxon>Heunggongvirae</taxon>
        <taxon>Peploviricota</taxon>
        <taxon>Herviviricetes</taxon>
        <taxon>Herpesvirales</taxon>
        <taxon>Orthoherpesviridae</taxon>
        <taxon>Alphaherpesvirinae</taxon>
        <taxon>Varicellovirus</taxon>
        <taxon>Varicellovirus equidalpha1</taxon>
        <taxon>Equid alphaherpesvirus 1</taxon>
    </lineage>
</organism>
<protein>
    <recommendedName>
        <fullName evidence="1">Alkaline nuclease</fullName>
        <ecNumber evidence="1">3.1.-.-</ecNumber>
    </recommendedName>
</protein>
<proteinExistence type="inferred from homology"/>
<comment type="function">
    <text evidence="1">Plays a role in processing non linear or branched viral DNA intermediates in order to promote the production of mature packaged unit-length linear progeny viral DNA molecules. Exhibits endonuclease and exonuclease activities and accepts both double-stranded and single-stranded DNA as substrate. Exonuclease digestion of DNA is in the 5'-&gt; 3' direction and the products are 5'-monophosphate nucleosides. Additionally, forms a recombinase with the major DNA-binding protein, which displays strand exchange activity.</text>
</comment>
<comment type="subunit">
    <text evidence="1">Interacts with major DNA-binding protein; this interaction increases the nuclease processivity of the alkaline exonuclease.</text>
</comment>
<comment type="subcellular location">
    <subcellularLocation>
        <location evidence="1">Host nucleus</location>
    </subcellularLocation>
    <subcellularLocation>
        <location evidence="1">Host cytoplasm</location>
    </subcellularLocation>
</comment>
<comment type="similarity">
    <text evidence="1">Belongs to the herpesviridae alkaline nuclease family.</text>
</comment>
<gene>
    <name type="ordered locus">50</name>
</gene>
<organismHost>
    <name type="scientific">Equus caballus</name>
    <name type="common">Horse</name>
    <dbReference type="NCBI Taxonomy" id="9796"/>
</organismHost>
<sequence>MDSSPVTYSGEPPYKLRRLSPSYPYVSKLRERCASKIETLSEGSARDSLEEEDVSEAMATGAFLATRLYLPSVLPQRITTLTFLDHFKKSRPLPNSDKRLNPIFYRLAYIRDLVGEMELEGIVERGTASRLLGASSPAGFVAGTYTHARDLSKTMSLASVRDAVLAIEAQTRDQSESQLWALLRRGLATASTMKWGALGPQYHPQWCEVSTNAKGIPNNPALQFGQTNERTARSLISALYVARSEAATPDLLVDPGCGQCFVFDESASVPGDAYACGLLMDARTGVVGASLDMLVCDRDPSGVLSPHSTQTTLDFFEIKCRAKYLFDPDLFSPVATAYANLLKHRTAVCLRKFLRSIKNPAVEYFASTSVPGATEALITCNSSWKPREVNETNRRCGDFDRDHIALNLDASSDVWLFSEPDLESETITPARWDTGELALSVPVFANPRHPNFKQILVQAYVLSGHFPDHQLRPFLVTFIGRHRKRCEEGKTFTICDRPEGSPYNLNEVVHSSCAIPILLFVTPVIVDREGCWEDIEIESLTAFNKTADAIWDSDSPADVSEPTSS</sequence>
<keyword id="KW-0255">Endonuclease</keyword>
<keyword id="KW-0269">Exonuclease</keyword>
<keyword id="KW-1035">Host cytoplasm</keyword>
<keyword id="KW-1048">Host nucleus</keyword>
<keyword id="KW-0945">Host-virus interaction</keyword>
<keyword id="KW-0378">Hydrolase</keyword>
<keyword id="KW-0540">Nuclease</keyword>
<accession>Q6S6S2</accession>
<feature type="chain" id="PRO_0000115693" description="Alkaline nuclease">
    <location>
        <begin position="1"/>
        <end position="565"/>
    </location>
</feature>
<feature type="site" description="Required for function" evidence="1">
    <location>
        <position position="229"/>
    </location>
</feature>
<feature type="site" description="Required for function" evidence="1">
    <location>
        <position position="292"/>
    </location>
</feature>
<feature type="site" description="Required for function" evidence="1">
    <location>
        <position position="317"/>
    </location>
</feature>
<feature type="site" description="Required for function" evidence="1">
    <location>
        <position position="319"/>
    </location>
</feature>
<evidence type="ECO:0000255" key="1">
    <source>
        <dbReference type="HAMAP-Rule" id="MF_04009"/>
    </source>
</evidence>
<name>AN_EHV1V</name>